<protein>
    <recommendedName>
        <fullName>Centromere protein C</fullName>
        <shortName>CENP-C</shortName>
    </recommendedName>
    <alternativeName>
        <fullName>Centromere autoantigen C</fullName>
    </alternativeName>
    <alternativeName>
        <fullName>Centromere protein C 1</fullName>
        <shortName>CENP-C 1</shortName>
    </alternativeName>
    <alternativeName>
        <fullName>Interphase centromere complex protein 7</fullName>
    </alternativeName>
</protein>
<gene>
    <name type="primary">CENPC</name>
    <name type="synonym">CENPC1</name>
    <name type="synonym">ICEN7</name>
</gene>
<organism>
    <name type="scientific">Homo sapiens</name>
    <name type="common">Human</name>
    <dbReference type="NCBI Taxonomy" id="9606"/>
    <lineage>
        <taxon>Eukaryota</taxon>
        <taxon>Metazoa</taxon>
        <taxon>Chordata</taxon>
        <taxon>Craniata</taxon>
        <taxon>Vertebrata</taxon>
        <taxon>Euteleostomi</taxon>
        <taxon>Mammalia</taxon>
        <taxon>Eutheria</taxon>
        <taxon>Euarchontoglires</taxon>
        <taxon>Primates</taxon>
        <taxon>Haplorrhini</taxon>
        <taxon>Catarrhini</taxon>
        <taxon>Hominidae</taxon>
        <taxon>Homo</taxon>
    </lineage>
</organism>
<comment type="function">
    <text evidence="8 10">Component of the CENPA-NAC (nucleosome-associated) complex, a complex that plays a central role in assembly of kinetochore proteins, mitotic progression and chromosome segregation. The CENPA-NAC complex recruits the CENPA-CAD (nucleosome distal) complex and may be involved in incorporation of newly synthesized CENPA into centromeres. CENPC recruits DNA methylation and DNMT3B to both centromeric and pericentromeric satellite repeats and regulates the histone code in these regions.</text>
</comment>
<comment type="subunit">
    <text evidence="1 6 8 9 12 13">Oligomer. Component of the CENPA-NAC complex, at least composed of CENPA, CENPC, CENPH, CENPM, CENPN, CENPT and CENPU (PubMed:16622419). The CENPA-NAC complex interacts with the CENPA-CAD complex, composed of CENPI, CENPK, CENPL, CENPO, CENPP, CENPQ, CENPR and CENPS. Binds to DAXX (PubMed:9645950). Interacts with DNMT3B (PubMed:19482874). Interacts directly with CENPA (PubMed:19503796). Identified in a centromere complex containing histones H2A, H2B and H4, and at least CENPA, CENPB, CENPC, CENPT, CENPN, HJURP, SUPT16H, SSRP1 and RSF1 (PubMed:27499292). Interacts with MEIKIN (By similarity).</text>
</comment>
<comment type="interaction">
    <interactant intactId="EBI-295799">
        <id>Q03188</id>
    </interactant>
    <interactant intactId="EBI-1751979">
        <id>P49450</id>
        <label>CENPA</label>
    </interactant>
    <organismsDiffer>false</organismsDiffer>
    <experiments>4</experiments>
</comment>
<comment type="interaction">
    <interactant intactId="EBI-295799">
        <id>Q03188</id>
    </interactant>
    <interactant intactId="EBI-295799">
        <id>Q03188</id>
        <label>CENPC</label>
    </interactant>
    <organismsDiffer>false</organismsDiffer>
    <experiments>4</experiments>
</comment>
<comment type="interaction">
    <interactant intactId="EBI-295799">
        <id>Q03188</id>
    </interactant>
    <interactant intactId="EBI-5327611">
        <id>P16401</id>
        <label>H1-5</label>
    </interactant>
    <organismsDiffer>false</organismsDiffer>
    <experiments>2</experiments>
</comment>
<comment type="subcellular location">
    <subcellularLocation>
        <location evidence="7">Nucleus</location>
    </subcellularLocation>
    <subcellularLocation>
        <location evidence="7 8 10">Chromosome</location>
        <location evidence="7 8 10">Centromere</location>
        <location evidence="7 8 10">Kinetochore</location>
    </subcellularLocation>
    <subcellularLocation>
        <location evidence="13">Chromosome</location>
        <location evidence="13">Centromere</location>
    </subcellularLocation>
    <text evidence="10">Localizes exclusively in the kinetochore domain of centromeres.</text>
</comment>
<comment type="alternative products">
    <event type="alternative splicing"/>
    <isoform>
        <id>Q03188-1</id>
        <name>1</name>
        <sequence type="displayed"/>
    </isoform>
    <isoform>
        <id>Q03188-2</id>
        <name>2</name>
        <sequence type="described" ref="VSP_057280 VSP_057281"/>
    </isoform>
</comment>
<comment type="developmental stage">
    <text evidence="11">Expression varies across the cell cycle, with high levels in G2 phase (at the mRNA level).</text>
</comment>
<comment type="domain">
    <text evidence="9">The MIF2 homology domain II targets centromeres and binds the alpha satellite DNA in vivo. The MIF2 homology domain III can induce CENPC dimerization/oligomerization.</text>
</comment>
<comment type="similarity">
    <text evidence="16">Belongs to the CENP-C/MIF2 family.</text>
</comment>
<feature type="chain" id="PRO_0000089474" description="Centromere protein C">
    <location>
        <begin position="1"/>
        <end position="943"/>
    </location>
</feature>
<feature type="region of interest" description="Disordered" evidence="3">
    <location>
        <begin position="70"/>
        <end position="91"/>
    </location>
</feature>
<feature type="region of interest" description="Disordered" evidence="3">
    <location>
        <begin position="224"/>
        <end position="250"/>
    </location>
</feature>
<feature type="region of interest" description="Disordered" evidence="3">
    <location>
        <begin position="358"/>
        <end position="377"/>
    </location>
</feature>
<feature type="region of interest" description="Disordered" evidence="3">
    <location>
        <begin position="403"/>
        <end position="513"/>
    </location>
</feature>
<feature type="region of interest" description="Disordered" evidence="3">
    <location>
        <begin position="537"/>
        <end position="587"/>
    </location>
</feature>
<feature type="region of interest" description="Disordered" evidence="3">
    <location>
        <begin position="632"/>
        <end position="717"/>
    </location>
</feature>
<feature type="region of interest" description="MIF2 homology domain II">
    <location>
        <begin position="737"/>
        <end position="759"/>
    </location>
</feature>
<feature type="region of interest" description="MIF2 homology domain III">
    <location>
        <begin position="890"/>
        <end position="943"/>
    </location>
</feature>
<feature type="short sequence motif" description="Nuclear localization signal" evidence="2">
    <location>
        <begin position="259"/>
        <end position="273"/>
    </location>
</feature>
<feature type="short sequence motif" description="Nuclear localization signal" evidence="2">
    <location>
        <begin position="484"/>
        <end position="499"/>
    </location>
</feature>
<feature type="short sequence motif" description="Nuclear localization signal" evidence="2">
    <location>
        <begin position="558"/>
        <end position="574"/>
    </location>
</feature>
<feature type="short sequence motif" description="Nuclear localization signal" evidence="2">
    <location>
        <begin position="780"/>
        <end position="798"/>
    </location>
</feature>
<feature type="compositionally biased region" description="Basic and acidic residues" evidence="3">
    <location>
        <begin position="224"/>
        <end position="239"/>
    </location>
</feature>
<feature type="compositionally biased region" description="Basic residues" evidence="3">
    <location>
        <begin position="412"/>
        <end position="426"/>
    </location>
</feature>
<feature type="compositionally biased region" description="Basic and acidic residues" evidence="3">
    <location>
        <begin position="438"/>
        <end position="463"/>
    </location>
</feature>
<feature type="compositionally biased region" description="Basic and acidic residues" evidence="3">
    <location>
        <begin position="488"/>
        <end position="510"/>
    </location>
</feature>
<feature type="compositionally biased region" description="Basic residues" evidence="3">
    <location>
        <begin position="570"/>
        <end position="583"/>
    </location>
</feature>
<feature type="compositionally biased region" description="Polar residues" evidence="3">
    <location>
        <begin position="633"/>
        <end position="672"/>
    </location>
</feature>
<feature type="compositionally biased region" description="Basic and acidic residues" evidence="3">
    <location>
        <begin position="706"/>
        <end position="715"/>
    </location>
</feature>
<feature type="modified residue" description="Phosphoserine" evidence="22">
    <location>
        <position position="73"/>
    </location>
</feature>
<feature type="modified residue" description="Phosphoserine" evidence="20">
    <location>
        <position position="96"/>
    </location>
</feature>
<feature type="modified residue" description="Phosphothreonine" evidence="20 22">
    <location>
        <position position="130"/>
    </location>
</feature>
<feature type="modified residue" description="Phosphoserine" evidence="19">
    <location>
        <position position="146"/>
    </location>
</feature>
<feature type="modified residue" description="Phosphothreonine" evidence="19">
    <location>
        <position position="183"/>
    </location>
</feature>
<feature type="modified residue" description="Phosphoserine" evidence="19">
    <location>
        <position position="189"/>
    </location>
</feature>
<feature type="modified residue" description="Phosphoserine" evidence="17 20 21">
    <location>
        <position position="225"/>
    </location>
</feature>
<feature type="modified residue" description="Phosphoserine" evidence="18">
    <location>
        <position position="261"/>
    </location>
</feature>
<feature type="modified residue" description="Phosphoserine" evidence="18 22">
    <location>
        <position position="316"/>
    </location>
</feature>
<feature type="modified residue" description="Phosphoserine" evidence="22">
    <location>
        <position position="333"/>
    </location>
</feature>
<feature type="modified residue" description="Phosphoserine" evidence="1">
    <location>
        <position position="376"/>
    </location>
</feature>
<feature type="modified residue" description="Phosphoserine" evidence="1">
    <location>
        <position position="397"/>
    </location>
</feature>
<feature type="modified residue" description="Phosphoserine" evidence="20 21">
    <location>
        <position position="439"/>
    </location>
</feature>
<feature type="modified residue" description="Phosphoserine" evidence="22">
    <location>
        <position position="528"/>
    </location>
</feature>
<feature type="modified residue" description="Phosphoserine" evidence="19 20 22">
    <location>
        <position position="538"/>
    </location>
</feature>
<feature type="modified residue" description="Phosphoserine" evidence="22">
    <location>
        <position position="684"/>
    </location>
</feature>
<feature type="modified residue" description="Phosphoserine" evidence="21">
    <location>
        <position position="709"/>
    </location>
</feature>
<feature type="modified residue" description="Phosphoserine" evidence="21">
    <location>
        <position position="710"/>
    </location>
</feature>
<feature type="modified residue" description="Phosphothreonine" evidence="20 22">
    <location>
        <position position="734"/>
    </location>
</feature>
<feature type="modified residue" description="Phosphoserine" evidence="19 20">
    <location>
        <position position="763"/>
    </location>
</feature>
<feature type="modified residue" description="Phosphoserine" evidence="18 19 20">
    <location>
        <position position="773"/>
    </location>
</feature>
<feature type="cross-link" description="Glycyl lysine isopeptide (Lys-Gly) (interchain with G-Cter in SUMO2)" evidence="24">
    <location>
        <position position="45"/>
    </location>
</feature>
<feature type="cross-link" description="Glycyl lysine isopeptide (Lys-Gly) (interchain with G-Cter in SUMO2)" evidence="24">
    <location>
        <position position="119"/>
    </location>
</feature>
<feature type="cross-link" description="Glycyl lysine isopeptide (Lys-Gly) (interchain with G-Cter in SUMO2)" evidence="24">
    <location>
        <position position="134"/>
    </location>
</feature>
<feature type="cross-link" description="Glycyl lysine isopeptide (Lys-Gly) (interchain with G-Cter in SUMO2)" evidence="24">
    <location>
        <position position="180"/>
    </location>
</feature>
<feature type="cross-link" description="Glycyl lysine isopeptide (Lys-Gly) (interchain with G-Cter in SUMO2)" evidence="24">
    <location>
        <position position="212"/>
    </location>
</feature>
<feature type="cross-link" description="Glycyl lysine isopeptide (Lys-Gly) (interchain with G-Cter in SUMO2)" evidence="23">
    <location>
        <position position="217"/>
    </location>
</feature>
<feature type="cross-link" description="Glycyl lysine isopeptide (Lys-Gly) (interchain with G-Cter in SUMO2)" evidence="24">
    <location>
        <position position="238"/>
    </location>
</feature>
<feature type="cross-link" description="Glycyl lysine isopeptide (Lys-Gly) (interchain with G-Cter in SUMO2)" evidence="24">
    <location>
        <position position="260"/>
    </location>
</feature>
<feature type="cross-link" description="Glycyl lysine isopeptide (Lys-Gly) (interchain with G-Cter in SUMO2)" evidence="24">
    <location>
        <position position="271"/>
    </location>
</feature>
<feature type="cross-link" description="Glycyl lysine isopeptide (Lys-Gly) (interchain with G-Cter in SUMO2)" evidence="24">
    <location>
        <position position="273"/>
    </location>
</feature>
<feature type="cross-link" description="Glycyl lysine isopeptide (Lys-Gly) (interchain with G-Cter in SUMO2)" evidence="24">
    <location>
        <position position="297"/>
    </location>
</feature>
<feature type="cross-link" description="Glycyl lysine isopeptide (Lys-Gly) (interchain with G-Cter in SUMO2)" evidence="24">
    <location>
        <position position="440"/>
    </location>
</feature>
<feature type="cross-link" description="Glycyl lysine isopeptide (Lys-Gly) (interchain with G-Cter in SUMO2)" evidence="24">
    <location>
        <position position="534"/>
    </location>
</feature>
<feature type="cross-link" description="Glycyl lysine isopeptide (Lys-Gly) (interchain with G-Cter in SUMO2)" evidence="24">
    <location>
        <position position="677"/>
    </location>
</feature>
<feature type="cross-link" description="Glycyl lysine isopeptide (Lys-Gly) (interchain with G-Cter in SUMO2)" evidence="24">
    <location>
        <position position="727"/>
    </location>
</feature>
<feature type="cross-link" description="Glycyl lysine isopeptide (Lys-Gly) (interchain with G-Cter in SUMO2)" evidence="24">
    <location>
        <position position="807"/>
    </location>
</feature>
<feature type="splice variant" id="VSP_057280" description="In isoform 2." evidence="15">
    <original>PVYS</original>
    <variation>CLKC</variation>
    <location>
        <begin position="539"/>
        <end position="542"/>
    </location>
</feature>
<feature type="splice variant" id="VSP_057281" description="In isoform 2." evidence="15">
    <location>
        <begin position="543"/>
        <end position="943"/>
    </location>
</feature>
<feature type="sequence variant" id="VAR_069295" description="In dbSNP:rs11250." evidence="4 5 14 18 22">
    <original>L</original>
    <variation>F</variation>
    <location>
        <position position="341"/>
    </location>
</feature>
<feature type="sequence variant" id="VAR_069296" description="In dbSNP:rs1056787." evidence="4">
    <original>G</original>
    <variation>D</variation>
    <location>
        <position position="389"/>
    </location>
</feature>
<feature type="sequence conflict" description="In Ref. 1; AAA51974." evidence="16" ref="1">
    <original>Q</original>
    <variation>K</variation>
    <location>
        <position position="179"/>
    </location>
</feature>
<feature type="helix" evidence="27">
    <location>
        <begin position="263"/>
        <end position="267"/>
    </location>
</feature>
<feature type="strand" evidence="26">
    <location>
        <begin position="519"/>
        <end position="521"/>
    </location>
</feature>
<feature type="strand" evidence="25">
    <location>
        <begin position="528"/>
        <end position="531"/>
    </location>
</feature>
<name>CENPC_HUMAN</name>
<keyword id="KW-0002">3D-structure</keyword>
<keyword id="KW-0025">Alternative splicing</keyword>
<keyword id="KW-0131">Cell cycle</keyword>
<keyword id="KW-0132">Cell division</keyword>
<keyword id="KW-0137">Centromere</keyword>
<keyword id="KW-0158">Chromosome</keyword>
<keyword id="KW-0238">DNA-binding</keyword>
<keyword id="KW-1017">Isopeptide bond</keyword>
<keyword id="KW-0995">Kinetochore</keyword>
<keyword id="KW-0498">Mitosis</keyword>
<keyword id="KW-0539">Nucleus</keyword>
<keyword id="KW-0597">Phosphoprotein</keyword>
<keyword id="KW-1267">Proteomics identification</keyword>
<keyword id="KW-1185">Reference proteome</keyword>
<keyword id="KW-0832">Ubl conjugation</keyword>
<reference key="1">
    <citation type="journal article" date="1992" name="Cell">
        <title>CENP-C, an autoantigen in scleroderma, is a component of the human inner kinetochore plate.</title>
        <authorList>
            <person name="Saitoh H."/>
            <person name="Tomkiel J."/>
            <person name="Cooke C.A."/>
            <person name="Ratrie H. III"/>
            <person name="Maurer M."/>
            <person name="Rothfield N.F."/>
            <person name="Earnshaw W.C."/>
        </authorList>
    </citation>
    <scope>NUCLEOTIDE SEQUENCE [MRNA] (ISOFORM 1)</scope>
    <scope>VARIANTS PHE-341 AND ASP-389</scope>
    <source>
        <tissue>Placenta</tissue>
    </source>
</reference>
<reference key="2">
    <citation type="journal article" date="2005" name="Nature">
        <title>Generation and annotation of the DNA sequences of human chromosomes 2 and 4.</title>
        <authorList>
            <person name="Hillier L.W."/>
            <person name="Graves T.A."/>
            <person name="Fulton R.S."/>
            <person name="Fulton L.A."/>
            <person name="Pepin K.H."/>
            <person name="Minx P."/>
            <person name="Wagner-McPherson C."/>
            <person name="Layman D."/>
            <person name="Wylie K."/>
            <person name="Sekhon M."/>
            <person name="Becker M.C."/>
            <person name="Fewell G.A."/>
            <person name="Delehaunty K.D."/>
            <person name="Miner T.L."/>
            <person name="Nash W.E."/>
            <person name="Kremitzki C."/>
            <person name="Oddy L."/>
            <person name="Du H."/>
            <person name="Sun H."/>
            <person name="Bradshaw-Cordum H."/>
            <person name="Ali J."/>
            <person name="Carter J."/>
            <person name="Cordes M."/>
            <person name="Harris A."/>
            <person name="Isak A."/>
            <person name="van Brunt A."/>
            <person name="Nguyen C."/>
            <person name="Du F."/>
            <person name="Courtney L."/>
            <person name="Kalicki J."/>
            <person name="Ozersky P."/>
            <person name="Abbott S."/>
            <person name="Armstrong J."/>
            <person name="Belter E.A."/>
            <person name="Caruso L."/>
            <person name="Cedroni M."/>
            <person name="Cotton M."/>
            <person name="Davidson T."/>
            <person name="Desai A."/>
            <person name="Elliott G."/>
            <person name="Erb T."/>
            <person name="Fronick C."/>
            <person name="Gaige T."/>
            <person name="Haakenson W."/>
            <person name="Haglund K."/>
            <person name="Holmes A."/>
            <person name="Harkins R."/>
            <person name="Kim K."/>
            <person name="Kruchowski S.S."/>
            <person name="Strong C.M."/>
            <person name="Grewal N."/>
            <person name="Goyea E."/>
            <person name="Hou S."/>
            <person name="Levy A."/>
            <person name="Martinka S."/>
            <person name="Mead K."/>
            <person name="McLellan M.D."/>
            <person name="Meyer R."/>
            <person name="Randall-Maher J."/>
            <person name="Tomlinson C."/>
            <person name="Dauphin-Kohlberg S."/>
            <person name="Kozlowicz-Reilly A."/>
            <person name="Shah N."/>
            <person name="Swearengen-Shahid S."/>
            <person name="Snider J."/>
            <person name="Strong J.T."/>
            <person name="Thompson J."/>
            <person name="Yoakum M."/>
            <person name="Leonard S."/>
            <person name="Pearman C."/>
            <person name="Trani L."/>
            <person name="Radionenko M."/>
            <person name="Waligorski J.E."/>
            <person name="Wang C."/>
            <person name="Rock S.M."/>
            <person name="Tin-Wollam A.-M."/>
            <person name="Maupin R."/>
            <person name="Latreille P."/>
            <person name="Wendl M.C."/>
            <person name="Yang S.-P."/>
            <person name="Pohl C."/>
            <person name="Wallis J.W."/>
            <person name="Spieth J."/>
            <person name="Bieri T.A."/>
            <person name="Berkowicz N."/>
            <person name="Nelson J.O."/>
            <person name="Osborne J."/>
            <person name="Ding L."/>
            <person name="Meyer R."/>
            <person name="Sabo A."/>
            <person name="Shotland Y."/>
            <person name="Sinha P."/>
            <person name="Wohldmann P.E."/>
            <person name="Cook L.L."/>
            <person name="Hickenbotham M.T."/>
            <person name="Eldred J."/>
            <person name="Williams D."/>
            <person name="Jones T.A."/>
            <person name="She X."/>
            <person name="Ciccarelli F.D."/>
            <person name="Izaurralde E."/>
            <person name="Taylor J."/>
            <person name="Schmutz J."/>
            <person name="Myers R.M."/>
            <person name="Cox D.R."/>
            <person name="Huang X."/>
            <person name="McPherson J.D."/>
            <person name="Mardis E.R."/>
            <person name="Clifton S.W."/>
            <person name="Warren W.C."/>
            <person name="Chinwalla A.T."/>
            <person name="Eddy S.R."/>
            <person name="Marra M.A."/>
            <person name="Ovcharenko I."/>
            <person name="Furey T.S."/>
            <person name="Miller W."/>
            <person name="Eichler E.E."/>
            <person name="Bork P."/>
            <person name="Suyama M."/>
            <person name="Torrents D."/>
            <person name="Waterston R.H."/>
            <person name="Wilson R.K."/>
        </authorList>
    </citation>
    <scope>NUCLEOTIDE SEQUENCE [LARGE SCALE GENOMIC DNA]</scope>
</reference>
<reference key="3">
    <citation type="submission" date="2005-07" db="EMBL/GenBank/DDBJ databases">
        <authorList>
            <person name="Mural R.J."/>
            <person name="Istrail S."/>
            <person name="Sutton G."/>
            <person name="Florea L."/>
            <person name="Halpern A.L."/>
            <person name="Mobarry C.M."/>
            <person name="Lippert R."/>
            <person name="Walenz B."/>
            <person name="Shatkay H."/>
            <person name="Dew I."/>
            <person name="Miller J.R."/>
            <person name="Flanigan M.J."/>
            <person name="Edwards N.J."/>
            <person name="Bolanos R."/>
            <person name="Fasulo D."/>
            <person name="Halldorsson B.V."/>
            <person name="Hannenhalli S."/>
            <person name="Turner R."/>
            <person name="Yooseph S."/>
            <person name="Lu F."/>
            <person name="Nusskern D.R."/>
            <person name="Shue B.C."/>
            <person name="Zheng X.H."/>
            <person name="Zhong F."/>
            <person name="Delcher A.L."/>
            <person name="Huson D.H."/>
            <person name="Kravitz S.A."/>
            <person name="Mouchard L."/>
            <person name="Reinert K."/>
            <person name="Remington K.A."/>
            <person name="Clark A.G."/>
            <person name="Waterman M.S."/>
            <person name="Eichler E.E."/>
            <person name="Adams M.D."/>
            <person name="Hunkapiller M.W."/>
            <person name="Myers E.W."/>
            <person name="Venter J.C."/>
        </authorList>
    </citation>
    <scope>NUCLEOTIDE SEQUENCE [LARGE SCALE GENOMIC DNA]</scope>
    <scope>VARIANT PHE-341</scope>
</reference>
<reference key="4">
    <citation type="journal article" date="2004" name="Genome Res.">
        <title>The status, quality, and expansion of the NIH full-length cDNA project: the Mammalian Gene Collection (MGC).</title>
        <authorList>
            <consortium name="The MGC Project Team"/>
        </authorList>
    </citation>
    <scope>NUCLEOTIDE SEQUENCE [LARGE SCALE MRNA] (ISOFORM 1)</scope>
    <scope>VARIANT PHE-341</scope>
    <source>
        <tissue>Blood</tissue>
        <tissue>Testis</tissue>
    </source>
</reference>
<reference key="5">
    <citation type="submission" date="1999-05" db="EMBL/GenBank/DDBJ databases">
        <title>Promoter characterization of centromere protein C reveals its participation in cell cycle regulation in late G1-phase and expression control by E2F-1, pRb, p107 and Sp-1.</title>
        <authorList>
            <person name="Poppe M."/>
            <person name="Botz J."/>
            <person name="Hahm B."/>
            <person name="Dobat K."/>
            <person name="Eickelbaum W."/>
            <person name="Paweletz N."/>
            <person name="Arand M."/>
            <person name="Knehr M."/>
        </authorList>
    </citation>
    <scope>NUCLEOTIDE SEQUENCE [GENOMIC DNA] OF 1-21</scope>
</reference>
<reference key="6">
    <citation type="journal article" date="1998" name="J. Cell Sci.">
        <title>Interphase-specific association of intrinsic centromere protein CENP-C with HDaxx, a death domain-binding protein implicated in Fas-mediated cell death.</title>
        <authorList>
            <person name="Pluta A.F."/>
            <person name="Earnshaw W.C."/>
            <person name="Goldberg I.G."/>
        </authorList>
    </citation>
    <scope>INTERACTION WITH DAXX</scope>
    <scope>SUBCELLULAR LOCATION</scope>
</reference>
<reference key="7">
    <citation type="journal article" date="2006" name="Cell">
        <title>Global, in vivo, and site-specific phosphorylation dynamics in signaling networks.</title>
        <authorList>
            <person name="Olsen J.V."/>
            <person name="Blagoev B."/>
            <person name="Gnad F."/>
            <person name="Macek B."/>
            <person name="Kumar C."/>
            <person name="Mortensen P."/>
            <person name="Mann M."/>
        </authorList>
    </citation>
    <scope>PHOSPHORYLATION [LARGE SCALE ANALYSIS] AT SER-225</scope>
    <scope>IDENTIFICATION BY MASS SPECTROMETRY [LARGE SCALE ANALYSIS]</scope>
    <source>
        <tissue>Cervix carcinoma</tissue>
    </source>
</reference>
<reference key="8">
    <citation type="journal article" date="2006" name="Genes Cells">
        <title>Comprehensive analysis of the ICEN (Interphase Centromere Complex) components enriched in the CENP-A chromatin of human cells.</title>
        <authorList>
            <person name="Izuta H."/>
            <person name="Ikeno M."/>
            <person name="Suzuki N."/>
            <person name="Tomonaga T."/>
            <person name="Nozaki N."/>
            <person name="Obuse C."/>
            <person name="Kisu Y."/>
            <person name="Goshima N."/>
            <person name="Nomura F."/>
            <person name="Nomura N."/>
            <person name="Yoda K."/>
        </authorList>
    </citation>
    <scope>IDENTIFICATION BY MASS SPECTROMETRY</scope>
</reference>
<reference key="9">
    <citation type="journal article" date="2006" name="Nat. Cell Biol.">
        <title>The human CENP-A centromeric nucleosome-associated complex.</title>
        <authorList>
            <person name="Foltz D.R."/>
            <person name="Jansen L.E.T."/>
            <person name="Black B.E."/>
            <person name="Bailey A.O."/>
            <person name="Yates J.R. III"/>
            <person name="Cleveland D.W."/>
        </authorList>
    </citation>
    <scope>IDENTIFICATION IN THE CENPA-NAC COMPLEX WITH CENPA; CENPH; CENPM; CENPN; CENPT AND CENPU</scope>
</reference>
<reference key="10">
    <citation type="journal article" date="2007" name="Genome Biol.">
        <title>Co-localization of CENP-C and CENP-H to discontinuous domains of CENP-A chromatin at human neocentromeres.</title>
        <authorList>
            <person name="Alonso A."/>
            <person name="Fritz B."/>
            <person name="Hasson D."/>
            <person name="Abrusan G."/>
            <person name="Cheung F."/>
            <person name="Yoda K."/>
            <person name="Radlwimmer B."/>
            <person name="Ladurner A.G."/>
            <person name="Warburton P.E."/>
        </authorList>
    </citation>
    <scope>SUBCELLULAR LOCATION</scope>
</reference>
<reference key="11">
    <citation type="journal article" date="2008" name="Proc. Natl. Acad. Sci. U.S.A.">
        <title>A quantitative atlas of mitotic phosphorylation.</title>
        <authorList>
            <person name="Dephoure N."/>
            <person name="Zhou C."/>
            <person name="Villen J."/>
            <person name="Beausoleil S.A."/>
            <person name="Bakalarski C.E."/>
            <person name="Elledge S.J."/>
            <person name="Gygi S.P."/>
        </authorList>
    </citation>
    <scope>PHOSPHORYLATION [LARGE SCALE ANALYSIS] AT SER-261; SER-316 AND SER-773</scope>
    <scope>VARIANT [LARGE SCALE ANALYSIS] PHE-341</scope>
    <scope>IDENTIFICATION BY MASS SPECTROMETRY [LARGE SCALE ANALYSIS]</scope>
    <source>
        <tissue>Cervix carcinoma</tissue>
    </source>
</reference>
<reference key="12">
    <citation type="journal article" date="2009" name="PLoS ONE">
        <title>The C-terminal domain of CENP-C displays multiple and critical functions for mammalian centromere formation.</title>
        <authorList>
            <person name="Trazzi S."/>
            <person name="Perini G."/>
            <person name="Bernardoni R."/>
            <person name="Zoli M."/>
            <person name="Reese J.C."/>
            <person name="Musacchio A."/>
            <person name="Della Valle G."/>
        </authorList>
    </citation>
    <scope>DOMAIN</scope>
    <scope>SUBUNIT</scope>
    <scope>INTERACTION WITH CENPA</scope>
</reference>
<reference key="13">
    <citation type="journal article" date="2009" name="Hum. Mol. Genet.">
        <title>DNMT3B interacts with constitutive centromere protein CENP-C to modulate DNA methylation and the histone code at centromeric regions.</title>
        <authorList>
            <person name="Gopalakrishnan S."/>
            <person name="Sullivan B.A."/>
            <person name="Trazzi S."/>
            <person name="Della Valle G."/>
            <person name="Robertson K.D."/>
        </authorList>
    </citation>
    <scope>FUNCTION</scope>
    <scope>SUBCELLULAR LOCATION</scope>
    <scope>INTERACTION WITH DNMT3B</scope>
</reference>
<reference key="14">
    <citation type="journal article" date="2009" name="Sci. Signal.">
        <title>Quantitative phosphoproteomic analysis of T cell receptor signaling reveals system-wide modulation of protein-protein interactions.</title>
        <authorList>
            <person name="Mayya V."/>
            <person name="Lundgren D.H."/>
            <person name="Hwang S.-I."/>
            <person name="Rezaul K."/>
            <person name="Wu L."/>
            <person name="Eng J.K."/>
            <person name="Rodionov V."/>
            <person name="Han D.K."/>
        </authorList>
    </citation>
    <scope>PHOSPHORYLATION [LARGE SCALE ANALYSIS] AT SER-146; THR-183; SER-189; SER-538; SER-763 AND SER-773</scope>
    <scope>IDENTIFICATION BY MASS SPECTROMETRY [LARGE SCALE ANALYSIS]</scope>
    <source>
        <tissue>Leukemic T-cell</tissue>
    </source>
</reference>
<reference key="15">
    <citation type="journal article" date="2010" name="Sci. Signal.">
        <title>Quantitative phosphoproteomics reveals widespread full phosphorylation site occupancy during mitosis.</title>
        <authorList>
            <person name="Olsen J.V."/>
            <person name="Vermeulen M."/>
            <person name="Santamaria A."/>
            <person name="Kumar C."/>
            <person name="Miller M.L."/>
            <person name="Jensen L.J."/>
            <person name="Gnad F."/>
            <person name="Cox J."/>
            <person name="Jensen T.S."/>
            <person name="Nigg E.A."/>
            <person name="Brunak S."/>
            <person name="Mann M."/>
        </authorList>
    </citation>
    <scope>PHOSPHORYLATION [LARGE SCALE ANALYSIS] AT SER-96; THR-130; SER-225; SER-439; SER-538; THR-734; SER-763 AND SER-773</scope>
    <scope>IDENTIFICATION BY MASS SPECTROMETRY [LARGE SCALE ANALYSIS]</scope>
    <source>
        <tissue>Cervix carcinoma</tissue>
    </source>
</reference>
<reference key="16">
    <citation type="journal article" date="2011" name="Cell">
        <title>Induced ectopic kinetochore assembly bypasses the requirement for CENP-A nucleosomes.</title>
        <authorList>
            <person name="Gascoigne K.E."/>
            <person name="Takeuchi K."/>
            <person name="Suzuki A."/>
            <person name="Hori T."/>
            <person name="Fukagawa T."/>
            <person name="Cheeseman I.M."/>
        </authorList>
    </citation>
    <scope>FUNCTION</scope>
    <scope>SUBCELLULAR LOCATION</scope>
</reference>
<reference key="17">
    <citation type="journal article" date="2011" name="Sci. Signal.">
        <title>System-wide temporal characterization of the proteome and phosphoproteome of human embryonic stem cell differentiation.</title>
        <authorList>
            <person name="Rigbolt K.T."/>
            <person name="Prokhorova T.A."/>
            <person name="Akimov V."/>
            <person name="Henningsen J."/>
            <person name="Johansen P.T."/>
            <person name="Kratchmarova I."/>
            <person name="Kassem M."/>
            <person name="Mann M."/>
            <person name="Olsen J.V."/>
            <person name="Blagoev B."/>
        </authorList>
    </citation>
    <scope>PHOSPHORYLATION [LARGE SCALE ANALYSIS] AT SER-225; SER-439; SER-709 AND SER-710</scope>
    <scope>IDENTIFICATION BY MASS SPECTROMETRY [LARGE SCALE ANALYSIS]</scope>
</reference>
<reference key="18">
    <citation type="journal article" date="2013" name="J. Proteome Res.">
        <title>Toward a comprehensive characterization of a human cancer cell phosphoproteome.</title>
        <authorList>
            <person name="Zhou H."/>
            <person name="Di Palma S."/>
            <person name="Preisinger C."/>
            <person name="Peng M."/>
            <person name="Polat A.N."/>
            <person name="Heck A.J."/>
            <person name="Mohammed S."/>
        </authorList>
    </citation>
    <scope>PHOSPHORYLATION [LARGE SCALE ANALYSIS] AT SER-73; THR-130; SER-316; SER-333; SER-528; SER-538; SER-684 AND THR-734</scope>
    <scope>VARIANT [LARGE SCALE ANALYSIS] PHE-341</scope>
    <scope>IDENTIFICATION BY MASS SPECTROMETRY [LARGE SCALE ANALYSIS]</scope>
    <source>
        <tissue>Cervix carcinoma</tissue>
        <tissue>Erythroleukemia</tissue>
    </source>
</reference>
<reference key="19">
    <citation type="journal article" date="2014" name="Open Biol.">
        <title>A CENP-S/X complex assembles at the centromere in S and G2 phases of the human cell cycle.</title>
        <authorList>
            <person name="Dornblut C."/>
            <person name="Quinn N."/>
            <person name="Monajambashi S."/>
            <person name="Prendergast L."/>
            <person name="van Vuuren C."/>
            <person name="Muench S."/>
            <person name="Deng W."/>
            <person name="Leonhardt H."/>
            <person name="Cardoso M.C."/>
            <person name="Hoischen C."/>
            <person name="Diekmann S."/>
            <person name="Sullivan K.F."/>
        </authorList>
    </citation>
    <scope>DEVELOPMENTAL STAGE</scope>
</reference>
<reference key="20">
    <citation type="journal article" date="2015" name="Mol. Cell. Proteomics">
        <title>System-wide analysis of SUMOylation dynamics in response to replication stress reveals novel small ubiquitin-like modified target proteins and acceptor lysines relevant for genome stability.</title>
        <authorList>
            <person name="Xiao Z."/>
            <person name="Chang J.G."/>
            <person name="Hendriks I.A."/>
            <person name="Sigurdsson J.O."/>
            <person name="Olsen J.V."/>
            <person name="Vertegaal A.C."/>
        </authorList>
    </citation>
    <scope>SUMOYLATION [LARGE SCALE ANALYSIS] AT LYS-217</scope>
    <scope>IDENTIFICATION BY MASS SPECTROMETRY [LARGE SCALE ANALYSIS]</scope>
</reference>
<reference key="21">
    <citation type="journal article" date="2016" name="Mol. Cell">
        <title>The flexible ends of CENP-A nucleosome are required for mitotic fidelity.</title>
        <authorList>
            <person name="Roulland Y."/>
            <person name="Ouararhni K."/>
            <person name="Naidenov M."/>
            <person name="Ramos L."/>
            <person name="Shuaib M."/>
            <person name="Syed S.H."/>
            <person name="Lone I.N."/>
            <person name="Boopathi R."/>
            <person name="Fontaine E."/>
            <person name="Papai G."/>
            <person name="Tachiwana H."/>
            <person name="Gautier T."/>
            <person name="Skoufias D."/>
            <person name="Padmanabhan K."/>
            <person name="Bednar J."/>
            <person name="Kurumizaka H."/>
            <person name="Schultz P."/>
            <person name="Angelov D."/>
            <person name="Hamiche A."/>
            <person name="Dimitrov S."/>
        </authorList>
    </citation>
    <scope>SUBUNIT</scope>
</reference>
<reference key="22">
    <citation type="journal article" date="2017" name="Nat. Struct. Mol. Biol.">
        <title>Site-specific mapping of the human SUMO proteome reveals co-modification with phosphorylation.</title>
        <authorList>
            <person name="Hendriks I.A."/>
            <person name="Lyon D."/>
            <person name="Young C."/>
            <person name="Jensen L.J."/>
            <person name="Vertegaal A.C."/>
            <person name="Nielsen M.L."/>
        </authorList>
    </citation>
    <scope>SUMOYLATION [LARGE SCALE ANALYSIS] AT LYS-45; LYS-119; LYS-134; LYS-180; LYS-212; LYS-238; LYS-260; LYS-271; LYS-273; LYS-297; LYS-440; LYS-534; LYS-677; LYS-727 AND LYS-807</scope>
    <scope>IDENTIFICATION BY MASS SPECTROMETRY [LARGE SCALE ANALYSIS]</scope>
</reference>
<sequence length="943" mass="106834">MAASGLDHLKNGYRRRFCRPSRARDINTEQGQNVLEILQDCFEEKSLANDFSTNSTKSVPNSTRKIKDTCIQSPSKECQKSHPKSVPVSSKKKEASLQFVVEPSEATNRSVQAHEVHQKILATDVSSKNTPDSKKISSRNINDHHSEADEEFYLSVGSPSVLLDAKTSVSQNVIPSSAQKRETYTFENSVNMLPSSTEVSVKTKKRLNFDDKVMLKKIEIDNKVSDEEDKTSEGQERKPSGSSQNRIRDSEYEIQRQAKKSFSTLFLETVKRKSESSPIVRHAATAPPHSCPPDDTKLIEDEFIIDESDQSFASRSWITIPRKAGSLKQRTISPAESTALLQGRKSREKHHNILPKTLANDKHSHKPHPVETSQPSDKTVLDTSYALIGETVNNYRSTKYEMYSKNAEKPSRSKRTIKQKQRRKFMAKPAEEQLDVGQSKDENIHTSHITQDEFQRNSDRNMEEHEEMGNDCVSKKQMPPVGSKKSSTRKDKEESKKKRFSSESKNKLVPEEVTSTVTKSRRISRRPSDWWVVKSEESPVYSNSSVRNELPMHHNSSRKSTKKTNQSSKNIRKKTIPLKRQKTATKGNQRVQKFLNAEGSGGIVGHDEISRCSLSEPLESDEADLAKKKNLDCSRSTRSSKNEDNIMTAQNVPLKPQTSGYTCNIPTESNLDSGEHKTSVLEESGPSRLNNNYLMSGKNDVDDEEVHGSSDDSKQSKVIPKNRIHHKLVLPSNTPNVRRTKRTRLKPLEYWRGERIDYQGRPSGGFVISGVLSPDTISSKRKAKENIGKVNKKSNKKRICLDNDERKTNLMVNLGIPLGDPLQPTRVKDPETREIILMDLVRPQDTYQFFVKHGELKVYKTLDTPFFSTGKLILGPQEEKGKQHVGQDILVFYVNFGDLLCTLHETPYILSTGDSFYVPSGNYYNIKNLRNEESVLLFTQIKR</sequence>
<dbReference type="EMBL" id="M95724">
    <property type="protein sequence ID" value="AAA51974.1"/>
    <property type="molecule type" value="mRNA"/>
</dbReference>
<dbReference type="EMBL" id="AC104806">
    <property type="status" value="NOT_ANNOTATED_CDS"/>
    <property type="molecule type" value="Genomic_DNA"/>
</dbReference>
<dbReference type="EMBL" id="AC109356">
    <property type="status" value="NOT_ANNOTATED_CDS"/>
    <property type="molecule type" value="Genomic_DNA"/>
</dbReference>
<dbReference type="EMBL" id="CH471057">
    <property type="protein sequence ID" value="EAX05545.1"/>
    <property type="molecule type" value="Genomic_DNA"/>
</dbReference>
<dbReference type="EMBL" id="BC030695">
    <property type="protein sequence ID" value="AAH30695.1"/>
    <property type="molecule type" value="mRNA"/>
</dbReference>
<dbReference type="EMBL" id="BC041117">
    <property type="protein sequence ID" value="AAH41117.1"/>
    <property type="molecule type" value="mRNA"/>
</dbReference>
<dbReference type="EMBL" id="AF151723">
    <property type="protein sequence ID" value="AAF73191.1"/>
    <property type="molecule type" value="Genomic_DNA"/>
</dbReference>
<dbReference type="CCDS" id="CCDS47063.1">
    <molecule id="Q03188-1"/>
</dbReference>
<dbReference type="PIR" id="A42681">
    <property type="entry name" value="A42681"/>
</dbReference>
<dbReference type="RefSeq" id="NP_001803.2">
    <molecule id="Q03188-1"/>
    <property type="nucleotide sequence ID" value="NM_001812.4"/>
</dbReference>
<dbReference type="PDB" id="5LSJ">
    <property type="method" value="X-ray"/>
    <property type="resolution" value="3.25 A"/>
    <property type="chains" value="P/Q=1-71"/>
</dbReference>
<dbReference type="PDB" id="5LSK">
    <property type="method" value="X-ray"/>
    <property type="resolution" value="3.50 A"/>
    <property type="chains" value="P=1-71"/>
</dbReference>
<dbReference type="PDB" id="6MUO">
    <property type="method" value="EM"/>
    <property type="resolution" value="3.60 A"/>
    <property type="chains" value="K/L=518-537"/>
</dbReference>
<dbReference type="PDB" id="6MUP">
    <property type="method" value="EM"/>
    <property type="resolution" value="3.50 A"/>
    <property type="chains" value="K/L=518-537"/>
</dbReference>
<dbReference type="PDB" id="6SE6">
    <property type="method" value="EM"/>
    <property type="resolution" value="3.50 A"/>
    <property type="chains" value="V=426-537"/>
</dbReference>
<dbReference type="PDB" id="6SEE">
    <property type="method" value="EM"/>
    <property type="resolution" value="4.20 A"/>
    <property type="chains" value="V=426-537"/>
</dbReference>
<dbReference type="PDB" id="6SEF">
    <property type="method" value="EM"/>
    <property type="resolution" value="3.70 A"/>
    <property type="chains" value="V=426-537"/>
</dbReference>
<dbReference type="PDB" id="7PII">
    <property type="method" value="EM"/>
    <property type="resolution" value="2.68 A"/>
    <property type="chains" value="K/L=1-545"/>
</dbReference>
<dbReference type="PDB" id="7QOO">
    <property type="method" value="EM"/>
    <property type="resolution" value="4.60 A"/>
    <property type="chains" value="C=1-544"/>
</dbReference>
<dbReference type="PDB" id="7R5R">
    <property type="method" value="EM"/>
    <property type="resolution" value="2.44 A"/>
    <property type="chains" value="K/L=2-544"/>
</dbReference>
<dbReference type="PDB" id="7XHN">
    <property type="method" value="EM"/>
    <property type="resolution" value="3.71 A"/>
    <property type="chains" value="C/c=1-943"/>
</dbReference>
<dbReference type="PDB" id="7XHO">
    <property type="method" value="EM"/>
    <property type="resolution" value="3.29 A"/>
    <property type="chains" value="C/c=1-943"/>
</dbReference>
<dbReference type="PDB" id="7YWX">
    <property type="method" value="EM"/>
    <property type="resolution" value="12.00 A"/>
    <property type="chains" value="a/b=1-544"/>
</dbReference>
<dbReference type="PDB" id="7YYH">
    <property type="method" value="EM"/>
    <property type="resolution" value="8.90 A"/>
    <property type="chains" value="k/l=1-544"/>
</dbReference>
<dbReference type="PDBsum" id="5LSJ"/>
<dbReference type="PDBsum" id="5LSK"/>
<dbReference type="PDBsum" id="6MUO"/>
<dbReference type="PDBsum" id="6MUP"/>
<dbReference type="PDBsum" id="6SE6"/>
<dbReference type="PDBsum" id="6SEE"/>
<dbReference type="PDBsum" id="6SEF"/>
<dbReference type="PDBsum" id="7PII"/>
<dbReference type="PDBsum" id="7QOO"/>
<dbReference type="PDBsum" id="7R5R"/>
<dbReference type="PDBsum" id="7XHN"/>
<dbReference type="PDBsum" id="7XHO"/>
<dbReference type="PDBsum" id="7YWX"/>
<dbReference type="PDBsum" id="7YYH"/>
<dbReference type="EMDB" id="EMD-10152"/>
<dbReference type="EMDB" id="EMD-10153"/>
<dbReference type="EMDB" id="EMD-10154"/>
<dbReference type="EMDB" id="EMD-13437"/>
<dbReference type="EMDB" id="EMD-14098"/>
<dbReference type="EMDB" id="EMD-14334"/>
<dbReference type="EMDB" id="EMD-14351"/>
<dbReference type="EMDB" id="EMD-14375"/>
<dbReference type="EMDB" id="EMD-33196"/>
<dbReference type="EMDB" id="EMD-33197"/>
<dbReference type="EMDB" id="EMD-9250"/>
<dbReference type="EMDB" id="EMD-9251"/>
<dbReference type="SMR" id="Q03188"/>
<dbReference type="BioGRID" id="107489">
    <property type="interactions" value="126"/>
</dbReference>
<dbReference type="ComplexPortal" id="CPX-5646">
    <property type="entry name" value="Kinetochore CCAN complex"/>
</dbReference>
<dbReference type="CORUM" id="Q03188"/>
<dbReference type="FunCoup" id="Q03188">
    <property type="interactions" value="2289"/>
</dbReference>
<dbReference type="IntAct" id="Q03188">
    <property type="interactions" value="94"/>
</dbReference>
<dbReference type="MINT" id="Q03188"/>
<dbReference type="STRING" id="9606.ENSP00000273853"/>
<dbReference type="GlyGen" id="Q03188">
    <property type="glycosylation" value="4 sites, 2 N-linked glycans (2 sites), 1 O-linked glycan (2 sites)"/>
</dbReference>
<dbReference type="iPTMnet" id="Q03188"/>
<dbReference type="PhosphoSitePlus" id="Q03188"/>
<dbReference type="SwissPalm" id="Q03188"/>
<dbReference type="BioMuta" id="CENPC"/>
<dbReference type="DMDM" id="296434446"/>
<dbReference type="jPOST" id="Q03188"/>
<dbReference type="MassIVE" id="Q03188"/>
<dbReference type="PaxDb" id="9606-ENSP00000273853"/>
<dbReference type="PeptideAtlas" id="Q03188"/>
<dbReference type="ProteomicsDB" id="58203">
    <molecule id="Q03188-1"/>
</dbReference>
<dbReference type="ProteomicsDB" id="67172"/>
<dbReference type="Pumba" id="Q03188"/>
<dbReference type="ABCD" id="Q03188">
    <property type="antibodies" value="2 sequenced antibodies"/>
</dbReference>
<dbReference type="Antibodypedia" id="6105">
    <property type="antibodies" value="239 antibodies from 31 providers"/>
</dbReference>
<dbReference type="DNASU" id="1060"/>
<dbReference type="Ensembl" id="ENST00000273853.11">
    <molecule id="Q03188-1"/>
    <property type="protein sequence ID" value="ENSP00000273853.6"/>
    <property type="gene ID" value="ENSG00000145241.11"/>
</dbReference>
<dbReference type="Ensembl" id="ENST00000506882.5">
    <molecule id="Q03188-2"/>
    <property type="protein sequence ID" value="ENSP00000426078.1"/>
    <property type="gene ID" value="ENSG00000145241.11"/>
</dbReference>
<dbReference type="GeneID" id="1060"/>
<dbReference type="KEGG" id="hsa:1060"/>
<dbReference type="MANE-Select" id="ENST00000273853.11">
    <property type="protein sequence ID" value="ENSP00000273853.6"/>
    <property type="RefSeq nucleotide sequence ID" value="NM_001812.4"/>
    <property type="RefSeq protein sequence ID" value="NP_001803.2"/>
</dbReference>
<dbReference type="UCSC" id="uc003hdd.2">
    <molecule id="Q03188-1"/>
    <property type="organism name" value="human"/>
</dbReference>
<dbReference type="AGR" id="HGNC:1854"/>
<dbReference type="CTD" id="1060"/>
<dbReference type="DisGeNET" id="1060"/>
<dbReference type="GeneCards" id="CENPC"/>
<dbReference type="HGNC" id="HGNC:1854">
    <property type="gene designation" value="CENPC"/>
</dbReference>
<dbReference type="HPA" id="ENSG00000145241">
    <property type="expression patterns" value="Low tissue specificity"/>
</dbReference>
<dbReference type="MIM" id="117141">
    <property type="type" value="gene"/>
</dbReference>
<dbReference type="neXtProt" id="NX_Q03188"/>
<dbReference type="OpenTargets" id="ENSG00000145241"/>
<dbReference type="PharmGKB" id="PA26398"/>
<dbReference type="VEuPathDB" id="HostDB:ENSG00000145241"/>
<dbReference type="eggNOG" id="ENOG502RYQH">
    <property type="taxonomic scope" value="Eukaryota"/>
</dbReference>
<dbReference type="GeneTree" id="ENSGT00390000016737"/>
<dbReference type="HOGENOM" id="CLU_013594_0_0_1"/>
<dbReference type="InParanoid" id="Q03188"/>
<dbReference type="OMA" id="DHHNEAD"/>
<dbReference type="OrthoDB" id="1939643at2759"/>
<dbReference type="PAN-GO" id="Q03188">
    <property type="GO annotations" value="4 GO annotations based on evolutionary models"/>
</dbReference>
<dbReference type="PhylomeDB" id="Q03188"/>
<dbReference type="TreeFam" id="TF101132"/>
<dbReference type="PathwayCommons" id="Q03188"/>
<dbReference type="Reactome" id="R-HSA-141444">
    <property type="pathway name" value="Amplification of signal from unattached kinetochores via a MAD2 inhibitory signal"/>
</dbReference>
<dbReference type="Reactome" id="R-HSA-2467813">
    <property type="pathway name" value="Separation of Sister Chromatids"/>
</dbReference>
<dbReference type="Reactome" id="R-HSA-2500257">
    <property type="pathway name" value="Resolution of Sister Chromatid Cohesion"/>
</dbReference>
<dbReference type="Reactome" id="R-HSA-5663220">
    <property type="pathway name" value="RHO GTPases Activate Formins"/>
</dbReference>
<dbReference type="Reactome" id="R-HSA-606279">
    <property type="pathway name" value="Deposition of new CENPA-containing nucleosomes at the centromere"/>
</dbReference>
<dbReference type="Reactome" id="R-HSA-68877">
    <property type="pathway name" value="Mitotic Prometaphase"/>
</dbReference>
<dbReference type="Reactome" id="R-HSA-9648025">
    <property type="pathway name" value="EML4 and NUDC in mitotic spindle formation"/>
</dbReference>
<dbReference type="SignaLink" id="Q03188"/>
<dbReference type="SIGNOR" id="Q03188"/>
<dbReference type="BioGRID-ORCS" id="1060">
    <property type="hits" value="677 hits in 1133 CRISPR screens"/>
</dbReference>
<dbReference type="ChiTaRS" id="CENPC">
    <property type="organism name" value="human"/>
</dbReference>
<dbReference type="GeneWiki" id="CENPC1"/>
<dbReference type="GenomeRNAi" id="1060"/>
<dbReference type="Pharos" id="Q03188">
    <property type="development level" value="Tbio"/>
</dbReference>
<dbReference type="PRO" id="PR:Q03188"/>
<dbReference type="Proteomes" id="UP000005640">
    <property type="component" value="Chromosome 4"/>
</dbReference>
<dbReference type="RNAct" id="Q03188">
    <property type="molecule type" value="protein"/>
</dbReference>
<dbReference type="Bgee" id="ENSG00000145241">
    <property type="expression patterns" value="Expressed in calcaneal tendon and 106 other cell types or tissues"/>
</dbReference>
<dbReference type="ExpressionAtlas" id="Q03188">
    <property type="expression patterns" value="baseline and differential"/>
</dbReference>
<dbReference type="GO" id="GO:0000779">
    <property type="term" value="C:condensed chromosome, centromeric region"/>
    <property type="evidence" value="ECO:0000314"/>
    <property type="project" value="BHF-UCL"/>
</dbReference>
<dbReference type="GO" id="GO:0005829">
    <property type="term" value="C:cytosol"/>
    <property type="evidence" value="ECO:0000304"/>
    <property type="project" value="Reactome"/>
</dbReference>
<dbReference type="GO" id="GO:0000939">
    <property type="term" value="C:inner kinetochore"/>
    <property type="evidence" value="ECO:0000353"/>
    <property type="project" value="ComplexPortal"/>
</dbReference>
<dbReference type="GO" id="GO:0000776">
    <property type="term" value="C:kinetochore"/>
    <property type="evidence" value="ECO:0000314"/>
    <property type="project" value="HPA"/>
</dbReference>
<dbReference type="GO" id="GO:0030496">
    <property type="term" value="C:midbody"/>
    <property type="evidence" value="ECO:0000314"/>
    <property type="project" value="HPA"/>
</dbReference>
<dbReference type="GO" id="GO:0016604">
    <property type="term" value="C:nuclear body"/>
    <property type="evidence" value="ECO:0000314"/>
    <property type="project" value="HPA"/>
</dbReference>
<dbReference type="GO" id="GO:0005654">
    <property type="term" value="C:nucleoplasm"/>
    <property type="evidence" value="ECO:0000314"/>
    <property type="project" value="HPA"/>
</dbReference>
<dbReference type="GO" id="GO:0005634">
    <property type="term" value="C:nucleus"/>
    <property type="evidence" value="ECO:0000303"/>
    <property type="project" value="ComplexPortal"/>
</dbReference>
<dbReference type="GO" id="GO:0005721">
    <property type="term" value="C:pericentric heterochromatin"/>
    <property type="evidence" value="ECO:0000314"/>
    <property type="project" value="UniProtKB"/>
</dbReference>
<dbReference type="GO" id="GO:0019237">
    <property type="term" value="F:centromeric DNA binding"/>
    <property type="evidence" value="ECO:0000318"/>
    <property type="project" value="GO_Central"/>
</dbReference>
<dbReference type="GO" id="GO:0003677">
    <property type="term" value="F:DNA binding"/>
    <property type="evidence" value="ECO:0000304"/>
    <property type="project" value="ProtInc"/>
</dbReference>
<dbReference type="GO" id="GO:0042802">
    <property type="term" value="F:identical protein binding"/>
    <property type="evidence" value="ECO:0000353"/>
    <property type="project" value="IntAct"/>
</dbReference>
<dbReference type="GO" id="GO:0051315">
    <property type="term" value="P:attachment of mitotic spindle microtubules to kinetochore"/>
    <property type="evidence" value="ECO:0000318"/>
    <property type="project" value="GO_Central"/>
</dbReference>
<dbReference type="GO" id="GO:0051301">
    <property type="term" value="P:cell division"/>
    <property type="evidence" value="ECO:0007669"/>
    <property type="project" value="UniProtKB-KW"/>
</dbReference>
<dbReference type="GO" id="GO:0007059">
    <property type="term" value="P:chromosome segregation"/>
    <property type="evidence" value="ECO:0000315"/>
    <property type="project" value="UniProtKB"/>
</dbReference>
<dbReference type="GO" id="GO:0051382">
    <property type="term" value="P:kinetochore assembly"/>
    <property type="evidence" value="ECO:0000315"/>
    <property type="project" value="UniProtKB"/>
</dbReference>
<dbReference type="GO" id="GO:0000278">
    <property type="term" value="P:mitotic cell cycle"/>
    <property type="evidence" value="ECO:0000315"/>
    <property type="project" value="UniProtKB"/>
</dbReference>
<dbReference type="GO" id="GO:0051455">
    <property type="term" value="P:spindle attachment to meiosis I kinetochore"/>
    <property type="evidence" value="ECO:0000318"/>
    <property type="project" value="GO_Central"/>
</dbReference>
<dbReference type="CDD" id="cd06993">
    <property type="entry name" value="cupin_CENP-C_C"/>
    <property type="match status" value="1"/>
</dbReference>
<dbReference type="FunFam" id="2.60.120.10:FF:000033">
    <property type="entry name" value="Centromere protein C 1"/>
    <property type="match status" value="1"/>
</dbReference>
<dbReference type="Gene3D" id="2.60.120.10">
    <property type="entry name" value="Jelly Rolls"/>
    <property type="match status" value="1"/>
</dbReference>
<dbReference type="InterPro" id="IPR028386">
    <property type="entry name" value="CENP-C/Mif2/cnp3"/>
</dbReference>
<dbReference type="InterPro" id="IPR028931">
    <property type="entry name" value="CENP-C_mid"/>
</dbReference>
<dbReference type="InterPro" id="IPR028052">
    <property type="entry name" value="CENP-C_N_dom"/>
</dbReference>
<dbReference type="InterPro" id="IPR025974">
    <property type="entry name" value="Mif2/CENP-C_cupin"/>
</dbReference>
<dbReference type="InterPro" id="IPR014710">
    <property type="entry name" value="RmlC-like_jellyroll"/>
</dbReference>
<dbReference type="InterPro" id="IPR011051">
    <property type="entry name" value="RmlC_Cupin_sf"/>
</dbReference>
<dbReference type="PANTHER" id="PTHR16684">
    <property type="entry name" value="CENTROMERE PROTEIN C"/>
    <property type="match status" value="1"/>
</dbReference>
<dbReference type="PANTHER" id="PTHR16684:SF12">
    <property type="entry name" value="CENTROMERE PROTEIN C"/>
    <property type="match status" value="1"/>
</dbReference>
<dbReference type="Pfam" id="PF11699">
    <property type="entry name" value="CENP-C_C"/>
    <property type="match status" value="1"/>
</dbReference>
<dbReference type="Pfam" id="PF15620">
    <property type="entry name" value="CENP-C_mid"/>
    <property type="match status" value="1"/>
</dbReference>
<dbReference type="Pfam" id="PF15622">
    <property type="entry name" value="CENP_C_N"/>
    <property type="match status" value="1"/>
</dbReference>
<dbReference type="SUPFAM" id="SSF51182">
    <property type="entry name" value="RmlC-like cupins"/>
    <property type="match status" value="1"/>
</dbReference>
<proteinExistence type="evidence at protein level"/>
<accession>Q03188</accession>
<accession>Q6PIR0</accession>
<accession>Q8IW27</accession>
<accession>Q9P0M5</accession>
<evidence type="ECO:0000250" key="1">
    <source>
        <dbReference type="UniProtKB" id="P49452"/>
    </source>
</evidence>
<evidence type="ECO:0000255" key="2"/>
<evidence type="ECO:0000256" key="3">
    <source>
        <dbReference type="SAM" id="MobiDB-lite"/>
    </source>
</evidence>
<evidence type="ECO:0000269" key="4">
    <source>
    </source>
</evidence>
<evidence type="ECO:0000269" key="5">
    <source>
    </source>
</evidence>
<evidence type="ECO:0000269" key="6">
    <source>
    </source>
</evidence>
<evidence type="ECO:0000269" key="7">
    <source>
    </source>
</evidence>
<evidence type="ECO:0000269" key="8">
    <source>
    </source>
</evidence>
<evidence type="ECO:0000269" key="9">
    <source>
    </source>
</evidence>
<evidence type="ECO:0000269" key="10">
    <source>
    </source>
</evidence>
<evidence type="ECO:0000269" key="11">
    <source>
    </source>
</evidence>
<evidence type="ECO:0000269" key="12">
    <source>
    </source>
</evidence>
<evidence type="ECO:0000269" key="13">
    <source>
    </source>
</evidence>
<evidence type="ECO:0000269" key="14">
    <source ref="3"/>
</evidence>
<evidence type="ECO:0000303" key="15">
    <source>
    </source>
</evidence>
<evidence type="ECO:0000305" key="16"/>
<evidence type="ECO:0007744" key="17">
    <source>
    </source>
</evidence>
<evidence type="ECO:0007744" key="18">
    <source>
    </source>
</evidence>
<evidence type="ECO:0007744" key="19">
    <source>
    </source>
</evidence>
<evidence type="ECO:0007744" key="20">
    <source>
    </source>
</evidence>
<evidence type="ECO:0007744" key="21">
    <source>
    </source>
</evidence>
<evidence type="ECO:0007744" key="22">
    <source>
    </source>
</evidence>
<evidence type="ECO:0007744" key="23">
    <source>
    </source>
</evidence>
<evidence type="ECO:0007744" key="24">
    <source>
    </source>
</evidence>
<evidence type="ECO:0007829" key="25">
    <source>
        <dbReference type="PDB" id="6SE6"/>
    </source>
</evidence>
<evidence type="ECO:0007829" key="26">
    <source>
        <dbReference type="PDB" id="7R5R"/>
    </source>
</evidence>
<evidence type="ECO:0007829" key="27">
    <source>
        <dbReference type="PDB" id="7XHO"/>
    </source>
</evidence>